<dbReference type="EC" id="2.7.8.7" evidence="1"/>
<dbReference type="EMBL" id="BA000036">
    <property type="protein sequence ID" value="BAB99884.1"/>
    <property type="molecule type" value="Genomic_DNA"/>
</dbReference>
<dbReference type="EMBL" id="BX927155">
    <property type="protein sequence ID" value="CAF21153.1"/>
    <property type="molecule type" value="Genomic_DNA"/>
</dbReference>
<dbReference type="RefSeq" id="NP_601692.1">
    <property type="nucleotide sequence ID" value="NC_003450.3"/>
</dbReference>
<dbReference type="RefSeq" id="WP_011015166.1">
    <property type="nucleotide sequence ID" value="NC_006958.1"/>
</dbReference>
<dbReference type="SMR" id="Q8NMS4"/>
<dbReference type="STRING" id="196627.cg2738"/>
<dbReference type="KEGG" id="cgb:cg2738"/>
<dbReference type="KEGG" id="cgl:Cgl2491"/>
<dbReference type="PATRIC" id="fig|196627.13.peg.2424"/>
<dbReference type="eggNOG" id="COG0736">
    <property type="taxonomic scope" value="Bacteria"/>
</dbReference>
<dbReference type="HOGENOM" id="CLU_089696_2_0_11"/>
<dbReference type="OrthoDB" id="517356at2"/>
<dbReference type="BioCyc" id="CORYNE:G18NG-12094-MONOMER"/>
<dbReference type="Proteomes" id="UP000000582">
    <property type="component" value="Chromosome"/>
</dbReference>
<dbReference type="Proteomes" id="UP000001009">
    <property type="component" value="Chromosome"/>
</dbReference>
<dbReference type="GO" id="GO:0005737">
    <property type="term" value="C:cytoplasm"/>
    <property type="evidence" value="ECO:0007669"/>
    <property type="project" value="UniProtKB-SubCell"/>
</dbReference>
<dbReference type="GO" id="GO:0008897">
    <property type="term" value="F:holo-[acyl-carrier-protein] synthase activity"/>
    <property type="evidence" value="ECO:0007669"/>
    <property type="project" value="UniProtKB-UniRule"/>
</dbReference>
<dbReference type="GO" id="GO:0000287">
    <property type="term" value="F:magnesium ion binding"/>
    <property type="evidence" value="ECO:0007669"/>
    <property type="project" value="UniProtKB-UniRule"/>
</dbReference>
<dbReference type="GO" id="GO:0006633">
    <property type="term" value="P:fatty acid biosynthetic process"/>
    <property type="evidence" value="ECO:0007669"/>
    <property type="project" value="UniProtKB-UniRule"/>
</dbReference>
<dbReference type="Gene3D" id="3.90.470.20">
    <property type="entry name" value="4'-phosphopantetheinyl transferase domain"/>
    <property type="match status" value="1"/>
</dbReference>
<dbReference type="HAMAP" id="MF_00101">
    <property type="entry name" value="AcpS"/>
    <property type="match status" value="1"/>
</dbReference>
<dbReference type="InterPro" id="IPR008278">
    <property type="entry name" value="4-PPantetheinyl_Trfase_dom"/>
</dbReference>
<dbReference type="InterPro" id="IPR037143">
    <property type="entry name" value="4-PPantetheinyl_Trfase_dom_sf"/>
</dbReference>
<dbReference type="InterPro" id="IPR002582">
    <property type="entry name" value="ACPS"/>
</dbReference>
<dbReference type="InterPro" id="IPR004568">
    <property type="entry name" value="Ppantetheine-prot_Trfase_dom"/>
</dbReference>
<dbReference type="NCBIfam" id="TIGR00556">
    <property type="entry name" value="pantethn_trn"/>
    <property type="match status" value="1"/>
</dbReference>
<dbReference type="NCBIfam" id="NF000831">
    <property type="entry name" value="PRK00070.3-1"/>
    <property type="match status" value="1"/>
</dbReference>
<dbReference type="Pfam" id="PF01648">
    <property type="entry name" value="ACPS"/>
    <property type="match status" value="1"/>
</dbReference>
<dbReference type="SUPFAM" id="SSF56214">
    <property type="entry name" value="4'-phosphopantetheinyl transferase"/>
    <property type="match status" value="1"/>
</dbReference>
<comment type="function">
    <text evidence="1">Transfers the 4'-phosphopantetheine moiety from coenzyme A to a Ser of acyl-carrier-protein.</text>
</comment>
<comment type="catalytic activity">
    <reaction evidence="1">
        <text>apo-[ACP] + CoA = holo-[ACP] + adenosine 3',5'-bisphosphate + H(+)</text>
        <dbReference type="Rhea" id="RHEA:12068"/>
        <dbReference type="Rhea" id="RHEA-COMP:9685"/>
        <dbReference type="Rhea" id="RHEA-COMP:9690"/>
        <dbReference type="ChEBI" id="CHEBI:15378"/>
        <dbReference type="ChEBI" id="CHEBI:29999"/>
        <dbReference type="ChEBI" id="CHEBI:57287"/>
        <dbReference type="ChEBI" id="CHEBI:58343"/>
        <dbReference type="ChEBI" id="CHEBI:64479"/>
        <dbReference type="EC" id="2.7.8.7"/>
    </reaction>
</comment>
<comment type="cofactor">
    <cofactor evidence="1">
        <name>Mg(2+)</name>
        <dbReference type="ChEBI" id="CHEBI:18420"/>
    </cofactor>
</comment>
<comment type="subcellular location">
    <subcellularLocation>
        <location evidence="1">Cytoplasm</location>
    </subcellularLocation>
</comment>
<comment type="similarity">
    <text evidence="1">Belongs to the P-Pant transferase superfamily. AcpS family.</text>
</comment>
<organism>
    <name type="scientific">Corynebacterium glutamicum (strain ATCC 13032 / DSM 20300 / JCM 1318 / BCRC 11384 / CCUG 27702 / LMG 3730 / NBRC 12168 / NCIMB 10025 / NRRL B-2784 / 534)</name>
    <dbReference type="NCBI Taxonomy" id="196627"/>
    <lineage>
        <taxon>Bacteria</taxon>
        <taxon>Bacillati</taxon>
        <taxon>Actinomycetota</taxon>
        <taxon>Actinomycetes</taxon>
        <taxon>Mycobacteriales</taxon>
        <taxon>Corynebacteriaceae</taxon>
        <taxon>Corynebacterium</taxon>
    </lineage>
</organism>
<keyword id="KW-0963">Cytoplasm</keyword>
<keyword id="KW-0275">Fatty acid biosynthesis</keyword>
<keyword id="KW-0276">Fatty acid metabolism</keyword>
<keyword id="KW-0444">Lipid biosynthesis</keyword>
<keyword id="KW-0443">Lipid metabolism</keyword>
<keyword id="KW-0460">Magnesium</keyword>
<keyword id="KW-0479">Metal-binding</keyword>
<keyword id="KW-1185">Reference proteome</keyword>
<keyword id="KW-0808">Transferase</keyword>
<feature type="chain" id="PRO_0000175640" description="Holo-[acyl-carrier-protein] synthase">
    <location>
        <begin position="1"/>
        <end position="135"/>
    </location>
</feature>
<feature type="binding site" evidence="1">
    <location>
        <position position="7"/>
    </location>
    <ligand>
        <name>Mg(2+)</name>
        <dbReference type="ChEBI" id="CHEBI:18420"/>
    </ligand>
</feature>
<feature type="binding site" evidence="1">
    <location>
        <position position="57"/>
    </location>
    <ligand>
        <name>Mg(2+)</name>
        <dbReference type="ChEBI" id="CHEBI:18420"/>
    </ligand>
</feature>
<reference key="1">
    <citation type="journal article" date="2003" name="Appl. Microbiol. Biotechnol.">
        <title>The Corynebacterium glutamicum genome: features and impacts on biotechnological processes.</title>
        <authorList>
            <person name="Ikeda M."/>
            <person name="Nakagawa S."/>
        </authorList>
    </citation>
    <scope>NUCLEOTIDE SEQUENCE [LARGE SCALE GENOMIC DNA]</scope>
    <source>
        <strain>ATCC 13032 / DSM 20300 / JCM 1318 / BCRC 11384 / CCUG 27702 / LMG 3730 / NBRC 12168 / NCIMB 10025 / NRRL B-2784 / 534</strain>
    </source>
</reference>
<reference key="2">
    <citation type="journal article" date="2003" name="J. Biotechnol.">
        <title>The complete Corynebacterium glutamicum ATCC 13032 genome sequence and its impact on the production of L-aspartate-derived amino acids and vitamins.</title>
        <authorList>
            <person name="Kalinowski J."/>
            <person name="Bathe B."/>
            <person name="Bartels D."/>
            <person name="Bischoff N."/>
            <person name="Bott M."/>
            <person name="Burkovski A."/>
            <person name="Dusch N."/>
            <person name="Eggeling L."/>
            <person name="Eikmanns B.J."/>
            <person name="Gaigalat L."/>
            <person name="Goesmann A."/>
            <person name="Hartmann M."/>
            <person name="Huthmacher K."/>
            <person name="Kraemer R."/>
            <person name="Linke B."/>
            <person name="McHardy A.C."/>
            <person name="Meyer F."/>
            <person name="Moeckel B."/>
            <person name="Pfefferle W."/>
            <person name="Puehler A."/>
            <person name="Rey D.A."/>
            <person name="Rueckert C."/>
            <person name="Rupp O."/>
            <person name="Sahm H."/>
            <person name="Wendisch V.F."/>
            <person name="Wiegraebe I."/>
            <person name="Tauch A."/>
        </authorList>
    </citation>
    <scope>NUCLEOTIDE SEQUENCE [LARGE SCALE GENOMIC DNA]</scope>
    <source>
        <strain>ATCC 13032 / DSM 20300 / JCM 1318 / BCRC 11384 / CCUG 27702 / LMG 3730 / NBRC 12168 / NCIMB 10025 / NRRL B-2784 / 534</strain>
    </source>
</reference>
<sequence>MISIGTDLVHISAFAEQLAQPGSSFMEVFSAGERRKANERQASRYAEHLAGRWAAKESFIKAWSQAIYGQPPVIAEEAVVWRDIEVRADAWGRVAIELAPELAAVVRESIGEFSSSLSISHDGDYAVATCVLTIQ</sequence>
<protein>
    <recommendedName>
        <fullName evidence="1">Holo-[acyl-carrier-protein] synthase</fullName>
        <shortName evidence="1">Holo-ACP synthase</shortName>
        <ecNumber evidence="1">2.7.8.7</ecNumber>
    </recommendedName>
    <alternativeName>
        <fullName evidence="1">4'-phosphopantetheinyl transferase AcpS</fullName>
    </alternativeName>
</protein>
<accession>Q8NMS4</accession>
<evidence type="ECO:0000255" key="1">
    <source>
        <dbReference type="HAMAP-Rule" id="MF_00101"/>
    </source>
</evidence>
<name>ACPS_CORGL</name>
<proteinExistence type="inferred from homology"/>
<gene>
    <name evidence="1" type="primary">acpS</name>
    <name type="synonym">ppt1</name>
    <name type="ordered locus">Cgl2491</name>
    <name type="ordered locus">cg2738</name>
</gene>